<organism>
    <name type="scientific">Marinomonas sp. (strain MWYL1)</name>
    <dbReference type="NCBI Taxonomy" id="400668"/>
    <lineage>
        <taxon>Bacteria</taxon>
        <taxon>Pseudomonadati</taxon>
        <taxon>Pseudomonadota</taxon>
        <taxon>Gammaproteobacteria</taxon>
        <taxon>Oceanospirillales</taxon>
        <taxon>Oceanospirillaceae</taxon>
        <taxon>Marinomonas</taxon>
    </lineage>
</organism>
<protein>
    <recommendedName>
        <fullName evidence="1">Holliday junction branch migration complex subunit RuvB</fullName>
        <ecNumber evidence="1">3.6.4.-</ecNumber>
    </recommendedName>
</protein>
<accession>A6VXD3</accession>
<sequence length="337" mass="37492">MIEQDRIISAELKGNDRQVDRAIRPQALAEYIGQPVVREQMEIFIQAARQRGEPLDHTLIFGPPGLGKTTLANIIGNEMGAEVRTTSGPVLERAGDLAALLTNLNEGDILFIDEIHRLSPAIEEVLYPAMEDYQLDIMIGEGPAARSIKIELPPFTLVGATTRAGLLTSPLRDRFGIVQRLEFYDVESLTTIVARSAGKMGVELDQSGCFEVARRSRGTPRIANRLLRRVRDVAQVSGEVLVGQKVAQRALDMLSVDSQGFDHLDRRMLLTMIEKFDGRPVGLDSVSAALGEDKDTIEDVIEPFLIQQGFIIRTPRGRQVTKRAYEHFNYQLPSDFK</sequence>
<keyword id="KW-0067">ATP-binding</keyword>
<keyword id="KW-0963">Cytoplasm</keyword>
<keyword id="KW-0227">DNA damage</keyword>
<keyword id="KW-0233">DNA recombination</keyword>
<keyword id="KW-0234">DNA repair</keyword>
<keyword id="KW-0238">DNA-binding</keyword>
<keyword id="KW-0378">Hydrolase</keyword>
<keyword id="KW-0547">Nucleotide-binding</keyword>
<comment type="function">
    <text evidence="1">The RuvA-RuvB-RuvC complex processes Holliday junction (HJ) DNA during genetic recombination and DNA repair, while the RuvA-RuvB complex plays an important role in the rescue of blocked DNA replication forks via replication fork reversal (RFR). RuvA specifically binds to HJ cruciform DNA, conferring on it an open structure. The RuvB hexamer acts as an ATP-dependent pump, pulling dsDNA into and through the RuvAB complex. RuvB forms 2 homohexamers on either side of HJ DNA bound by 1 or 2 RuvA tetramers; 4 subunits per hexamer contact DNA at a time. Coordinated motions by a converter formed by DNA-disengaged RuvB subunits stimulates ATP hydrolysis and nucleotide exchange. Immobilization of the converter enables RuvB to convert the ATP-contained energy into a lever motion, pulling 2 nucleotides of DNA out of the RuvA tetramer per ATP hydrolyzed, thus driving DNA branch migration. The RuvB motors rotate together with the DNA substrate, which together with the progressing nucleotide cycle form the mechanistic basis for DNA recombination by continuous HJ branch migration. Branch migration allows RuvC to scan DNA until it finds its consensus sequence, where it cleaves and resolves cruciform DNA.</text>
</comment>
<comment type="catalytic activity">
    <reaction evidence="1">
        <text>ATP + H2O = ADP + phosphate + H(+)</text>
        <dbReference type="Rhea" id="RHEA:13065"/>
        <dbReference type="ChEBI" id="CHEBI:15377"/>
        <dbReference type="ChEBI" id="CHEBI:15378"/>
        <dbReference type="ChEBI" id="CHEBI:30616"/>
        <dbReference type="ChEBI" id="CHEBI:43474"/>
        <dbReference type="ChEBI" id="CHEBI:456216"/>
    </reaction>
</comment>
<comment type="subunit">
    <text evidence="1">Homohexamer. Forms an RuvA(8)-RuvB(12)-Holliday junction (HJ) complex. HJ DNA is sandwiched between 2 RuvA tetramers; dsDNA enters through RuvA and exits via RuvB. An RuvB hexamer assembles on each DNA strand where it exits the tetramer. Each RuvB hexamer is contacted by two RuvA subunits (via domain III) on 2 adjacent RuvB subunits; this complex drives branch migration. In the full resolvosome a probable DNA-RuvA(4)-RuvB(12)-RuvC(2) complex forms which resolves the HJ.</text>
</comment>
<comment type="subcellular location">
    <subcellularLocation>
        <location evidence="1">Cytoplasm</location>
    </subcellularLocation>
</comment>
<comment type="domain">
    <text evidence="1">Has 3 domains, the large (RuvB-L) and small ATPase (RuvB-S) domains and the C-terminal head (RuvB-H) domain. The head domain binds DNA, while the ATPase domains jointly bind ATP, ADP or are empty depending on the state of the subunit in the translocation cycle. During a single DNA translocation step the structure of each domain remains the same, but their relative positions change.</text>
</comment>
<comment type="similarity">
    <text evidence="1">Belongs to the RuvB family.</text>
</comment>
<name>RUVB_MARMS</name>
<reference key="1">
    <citation type="submission" date="2007-06" db="EMBL/GenBank/DDBJ databases">
        <title>Complete sequence of Marinomonas sp. MWYL1.</title>
        <authorList>
            <consortium name="US DOE Joint Genome Institute"/>
            <person name="Copeland A."/>
            <person name="Lucas S."/>
            <person name="Lapidus A."/>
            <person name="Barry K."/>
            <person name="Glavina del Rio T."/>
            <person name="Dalin E."/>
            <person name="Tice H."/>
            <person name="Pitluck S."/>
            <person name="Kiss H."/>
            <person name="Brettin T."/>
            <person name="Bruce D."/>
            <person name="Detter J.C."/>
            <person name="Han C."/>
            <person name="Schmutz J."/>
            <person name="Larimer F."/>
            <person name="Land M."/>
            <person name="Hauser L."/>
            <person name="Kyrpides N."/>
            <person name="Kim E."/>
            <person name="Johnston A.W.B."/>
            <person name="Todd J.D."/>
            <person name="Rogers R."/>
            <person name="Wexler M."/>
            <person name="Bond P.L."/>
            <person name="Li Y."/>
            <person name="Richardson P."/>
        </authorList>
    </citation>
    <scope>NUCLEOTIDE SEQUENCE [LARGE SCALE GENOMIC DNA]</scope>
    <source>
        <strain>MWYL1</strain>
    </source>
</reference>
<gene>
    <name evidence="1" type="primary">ruvB</name>
    <name type="ordered locus">Mmwyl1_2190</name>
</gene>
<evidence type="ECO:0000255" key="1">
    <source>
        <dbReference type="HAMAP-Rule" id="MF_00016"/>
    </source>
</evidence>
<proteinExistence type="inferred from homology"/>
<feature type="chain" id="PRO_1000074088" description="Holliday junction branch migration complex subunit RuvB">
    <location>
        <begin position="1"/>
        <end position="337"/>
    </location>
</feature>
<feature type="region of interest" description="Large ATPase domain (RuvB-L)" evidence="1">
    <location>
        <begin position="4"/>
        <end position="184"/>
    </location>
</feature>
<feature type="region of interest" description="Small ATPAse domain (RuvB-S)" evidence="1">
    <location>
        <begin position="185"/>
        <end position="255"/>
    </location>
</feature>
<feature type="region of interest" description="Head domain (RuvB-H)" evidence="1">
    <location>
        <begin position="258"/>
        <end position="337"/>
    </location>
</feature>
<feature type="binding site" evidence="1">
    <location>
        <position position="23"/>
    </location>
    <ligand>
        <name>ATP</name>
        <dbReference type="ChEBI" id="CHEBI:30616"/>
    </ligand>
</feature>
<feature type="binding site" evidence="1">
    <location>
        <position position="24"/>
    </location>
    <ligand>
        <name>ATP</name>
        <dbReference type="ChEBI" id="CHEBI:30616"/>
    </ligand>
</feature>
<feature type="binding site" evidence="1">
    <location>
        <position position="65"/>
    </location>
    <ligand>
        <name>ATP</name>
        <dbReference type="ChEBI" id="CHEBI:30616"/>
    </ligand>
</feature>
<feature type="binding site" evidence="1">
    <location>
        <position position="68"/>
    </location>
    <ligand>
        <name>ATP</name>
        <dbReference type="ChEBI" id="CHEBI:30616"/>
    </ligand>
</feature>
<feature type="binding site" evidence="1">
    <location>
        <position position="69"/>
    </location>
    <ligand>
        <name>ATP</name>
        <dbReference type="ChEBI" id="CHEBI:30616"/>
    </ligand>
</feature>
<feature type="binding site" evidence="1">
    <location>
        <position position="69"/>
    </location>
    <ligand>
        <name>Mg(2+)</name>
        <dbReference type="ChEBI" id="CHEBI:18420"/>
    </ligand>
</feature>
<feature type="binding site" evidence="1">
    <location>
        <position position="70"/>
    </location>
    <ligand>
        <name>ATP</name>
        <dbReference type="ChEBI" id="CHEBI:30616"/>
    </ligand>
</feature>
<feature type="binding site" evidence="1">
    <location>
        <begin position="131"/>
        <end position="133"/>
    </location>
    <ligand>
        <name>ATP</name>
        <dbReference type="ChEBI" id="CHEBI:30616"/>
    </ligand>
</feature>
<feature type="binding site" evidence="1">
    <location>
        <position position="174"/>
    </location>
    <ligand>
        <name>ATP</name>
        <dbReference type="ChEBI" id="CHEBI:30616"/>
    </ligand>
</feature>
<feature type="binding site" evidence="1">
    <location>
        <position position="184"/>
    </location>
    <ligand>
        <name>ATP</name>
        <dbReference type="ChEBI" id="CHEBI:30616"/>
    </ligand>
</feature>
<feature type="binding site" evidence="1">
    <location>
        <position position="221"/>
    </location>
    <ligand>
        <name>ATP</name>
        <dbReference type="ChEBI" id="CHEBI:30616"/>
    </ligand>
</feature>
<feature type="binding site" evidence="1">
    <location>
        <position position="313"/>
    </location>
    <ligand>
        <name>DNA</name>
        <dbReference type="ChEBI" id="CHEBI:16991"/>
    </ligand>
</feature>
<feature type="binding site" evidence="1">
    <location>
        <position position="318"/>
    </location>
    <ligand>
        <name>DNA</name>
        <dbReference type="ChEBI" id="CHEBI:16991"/>
    </ligand>
</feature>
<dbReference type="EC" id="3.6.4.-" evidence="1"/>
<dbReference type="EMBL" id="CP000749">
    <property type="protein sequence ID" value="ABR71112.1"/>
    <property type="molecule type" value="Genomic_DNA"/>
</dbReference>
<dbReference type="SMR" id="A6VXD3"/>
<dbReference type="STRING" id="400668.Mmwyl1_2190"/>
<dbReference type="KEGG" id="mmw:Mmwyl1_2190"/>
<dbReference type="eggNOG" id="COG2255">
    <property type="taxonomic scope" value="Bacteria"/>
</dbReference>
<dbReference type="HOGENOM" id="CLU_055599_1_0_6"/>
<dbReference type="OrthoDB" id="9804478at2"/>
<dbReference type="GO" id="GO:0005737">
    <property type="term" value="C:cytoplasm"/>
    <property type="evidence" value="ECO:0007669"/>
    <property type="project" value="UniProtKB-SubCell"/>
</dbReference>
<dbReference type="GO" id="GO:0048476">
    <property type="term" value="C:Holliday junction resolvase complex"/>
    <property type="evidence" value="ECO:0007669"/>
    <property type="project" value="UniProtKB-UniRule"/>
</dbReference>
<dbReference type="GO" id="GO:0005524">
    <property type="term" value="F:ATP binding"/>
    <property type="evidence" value="ECO:0007669"/>
    <property type="project" value="UniProtKB-UniRule"/>
</dbReference>
<dbReference type="GO" id="GO:0016887">
    <property type="term" value="F:ATP hydrolysis activity"/>
    <property type="evidence" value="ECO:0007669"/>
    <property type="project" value="InterPro"/>
</dbReference>
<dbReference type="GO" id="GO:0000400">
    <property type="term" value="F:four-way junction DNA binding"/>
    <property type="evidence" value="ECO:0007669"/>
    <property type="project" value="UniProtKB-UniRule"/>
</dbReference>
<dbReference type="GO" id="GO:0009378">
    <property type="term" value="F:four-way junction helicase activity"/>
    <property type="evidence" value="ECO:0007669"/>
    <property type="project" value="InterPro"/>
</dbReference>
<dbReference type="GO" id="GO:0006310">
    <property type="term" value="P:DNA recombination"/>
    <property type="evidence" value="ECO:0007669"/>
    <property type="project" value="UniProtKB-UniRule"/>
</dbReference>
<dbReference type="GO" id="GO:0006281">
    <property type="term" value="P:DNA repair"/>
    <property type="evidence" value="ECO:0007669"/>
    <property type="project" value="UniProtKB-UniRule"/>
</dbReference>
<dbReference type="CDD" id="cd00009">
    <property type="entry name" value="AAA"/>
    <property type="match status" value="1"/>
</dbReference>
<dbReference type="FunFam" id="3.40.50.300:FF:000073">
    <property type="entry name" value="Holliday junction ATP-dependent DNA helicase RuvB"/>
    <property type="match status" value="1"/>
</dbReference>
<dbReference type="Gene3D" id="1.10.8.60">
    <property type="match status" value="1"/>
</dbReference>
<dbReference type="Gene3D" id="3.40.50.300">
    <property type="entry name" value="P-loop containing nucleotide triphosphate hydrolases"/>
    <property type="match status" value="1"/>
</dbReference>
<dbReference type="Gene3D" id="1.10.10.10">
    <property type="entry name" value="Winged helix-like DNA-binding domain superfamily/Winged helix DNA-binding domain"/>
    <property type="match status" value="1"/>
</dbReference>
<dbReference type="HAMAP" id="MF_00016">
    <property type="entry name" value="DNA_HJ_migration_RuvB"/>
    <property type="match status" value="1"/>
</dbReference>
<dbReference type="InterPro" id="IPR003593">
    <property type="entry name" value="AAA+_ATPase"/>
</dbReference>
<dbReference type="InterPro" id="IPR041445">
    <property type="entry name" value="AAA_lid_4"/>
</dbReference>
<dbReference type="InterPro" id="IPR004605">
    <property type="entry name" value="DNA_helicase_Holl-junc_RuvB"/>
</dbReference>
<dbReference type="InterPro" id="IPR027417">
    <property type="entry name" value="P-loop_NTPase"/>
</dbReference>
<dbReference type="InterPro" id="IPR008824">
    <property type="entry name" value="RuvB-like_N"/>
</dbReference>
<dbReference type="InterPro" id="IPR008823">
    <property type="entry name" value="RuvB_C"/>
</dbReference>
<dbReference type="InterPro" id="IPR036388">
    <property type="entry name" value="WH-like_DNA-bd_sf"/>
</dbReference>
<dbReference type="InterPro" id="IPR036390">
    <property type="entry name" value="WH_DNA-bd_sf"/>
</dbReference>
<dbReference type="NCBIfam" id="NF000868">
    <property type="entry name" value="PRK00080.1"/>
    <property type="match status" value="1"/>
</dbReference>
<dbReference type="NCBIfam" id="TIGR00635">
    <property type="entry name" value="ruvB"/>
    <property type="match status" value="1"/>
</dbReference>
<dbReference type="PANTHER" id="PTHR42848">
    <property type="match status" value="1"/>
</dbReference>
<dbReference type="PANTHER" id="PTHR42848:SF1">
    <property type="entry name" value="HOLLIDAY JUNCTION BRANCH MIGRATION COMPLEX SUBUNIT RUVB"/>
    <property type="match status" value="1"/>
</dbReference>
<dbReference type="Pfam" id="PF17864">
    <property type="entry name" value="AAA_lid_4"/>
    <property type="match status" value="1"/>
</dbReference>
<dbReference type="Pfam" id="PF05491">
    <property type="entry name" value="RuvB_C"/>
    <property type="match status" value="1"/>
</dbReference>
<dbReference type="Pfam" id="PF05496">
    <property type="entry name" value="RuvB_N"/>
    <property type="match status" value="1"/>
</dbReference>
<dbReference type="SMART" id="SM00382">
    <property type="entry name" value="AAA"/>
    <property type="match status" value="1"/>
</dbReference>
<dbReference type="SUPFAM" id="SSF52540">
    <property type="entry name" value="P-loop containing nucleoside triphosphate hydrolases"/>
    <property type="match status" value="1"/>
</dbReference>
<dbReference type="SUPFAM" id="SSF46785">
    <property type="entry name" value="Winged helix' DNA-binding domain"/>
    <property type="match status" value="1"/>
</dbReference>